<proteinExistence type="inferred from homology"/>
<accession>C5C9U0</accession>
<organism>
    <name type="scientific">Micrococcus luteus (strain ATCC 4698 / DSM 20030 / JCM 1464 / CCM 169 / CCUG 5858 / IAM 1056 / NBRC 3333 / NCIMB 9278 / NCTC 2665 / VKM Ac-2230)</name>
    <name type="common">Micrococcus lysodeikticus</name>
    <dbReference type="NCBI Taxonomy" id="465515"/>
    <lineage>
        <taxon>Bacteria</taxon>
        <taxon>Bacillati</taxon>
        <taxon>Actinomycetota</taxon>
        <taxon>Actinomycetes</taxon>
        <taxon>Micrococcales</taxon>
        <taxon>Micrococcaceae</taxon>
        <taxon>Micrococcus</taxon>
    </lineage>
</organism>
<evidence type="ECO:0000255" key="1">
    <source>
        <dbReference type="HAMAP-Rule" id="MF_01595"/>
    </source>
</evidence>
<evidence type="ECO:0000256" key="2">
    <source>
        <dbReference type="SAM" id="MobiDB-lite"/>
    </source>
</evidence>
<gene>
    <name evidence="1" type="primary">pnp</name>
    <name type="ordered locus">Mlut_07100</name>
</gene>
<protein>
    <recommendedName>
        <fullName evidence="1">Polyribonucleotide nucleotidyltransferase</fullName>
        <ecNumber evidence="1">2.7.7.8</ecNumber>
    </recommendedName>
    <alternativeName>
        <fullName evidence="1">Polynucleotide phosphorylase</fullName>
        <shortName evidence="1">PNPase</shortName>
    </alternativeName>
</protein>
<reference key="1">
    <citation type="journal article" date="2010" name="J. Bacteriol.">
        <title>Genome sequence of the Fleming strain of Micrococcus luteus, a simple free-living actinobacterium.</title>
        <authorList>
            <person name="Young M."/>
            <person name="Artsatbanov V."/>
            <person name="Beller H.R."/>
            <person name="Chandra G."/>
            <person name="Chater K.F."/>
            <person name="Dover L.G."/>
            <person name="Goh E.B."/>
            <person name="Kahan T."/>
            <person name="Kaprelyants A.S."/>
            <person name="Kyrpides N."/>
            <person name="Lapidus A."/>
            <person name="Lowry S.R."/>
            <person name="Lykidis A."/>
            <person name="Mahillon J."/>
            <person name="Markowitz V."/>
            <person name="Mavromatis K."/>
            <person name="Mukamolova G.V."/>
            <person name="Oren A."/>
            <person name="Rokem J.S."/>
            <person name="Smith M.C."/>
            <person name="Young D.I."/>
            <person name="Greenblatt C.L."/>
        </authorList>
    </citation>
    <scope>NUCLEOTIDE SEQUENCE [LARGE SCALE GENOMIC DNA]</scope>
    <source>
        <strain>ATCC 4698 / DSM 20030 / JCM 1464 / CCM 169 / CCUG 5858 / IAM 1056 / NBRC 3333 / NCIMB 9278 / NCTC 2665 / VKM Ac-2230</strain>
    </source>
</reference>
<name>PNP_MICLC</name>
<sequence>MEGPEITFAEAVIDNGSYGKRTVRFETGRLAQQAAGAAMVYLDEETSMLSATTVGKSPREGFDFFPLTVDVEERMYASGRIPGSFFRREGRPSTDAILTCRLIDRPLRPAFVKGIRNEVQVVVTVTSIAPDEIYDTVAINAASLSTQLSGLPFSGPIGGVRMALMDDGSGARQWVAFPKHSQLKGAVFNMAVAGRVVGDDVAIMMVEAEATPDSWTLVKERGAQAPTEEIVAEGLEAAKPFIRALCEAQADLVKRAGKDPVDVPVFQDYQDDAYAAVEKLATDRLTEIFSIADKQERESASYAYLLEVLEELAGEGKDFAERKGEIAKAYGSLTKQIVRRRILTDQVRIDGRGLTDIRKLTAEVEVLPRVHGSAIFERGETQIMGVTTLNMLKMEQQIDSLSPETAKRYMHHYNFPPYSTGETGRVGSPKRREIGHGALAERALVPVLPAREEFPYAIRQVSEALSSNGSTSMGSVCASTLSLLNAGVPLRAHVAGIAMGLVSAEVDGQTQYAALTDILGAEDAFGDMDFKVAGTAEFVTAIQLDTKLDGIPASVLASALTQAREARLHILSVLNAAIDAPDEMAPTAPRIISVRIPVDKIGAVIGPKGAMINQIQDDTGADITIEDDGTVLIGATDGASAEAARSAVNAIANPQVPEVGERYLGTVVKLTTFGAFVSLTPGKDGLLHVSELRKLNEGKRVDDVEDVLGVGQKVQVEITKIDDRGKLSLSPVGAESDAVAETADAIESSQTEA</sequence>
<keyword id="KW-0963">Cytoplasm</keyword>
<keyword id="KW-0460">Magnesium</keyword>
<keyword id="KW-0479">Metal-binding</keyword>
<keyword id="KW-0548">Nucleotidyltransferase</keyword>
<keyword id="KW-1185">Reference proteome</keyword>
<keyword id="KW-0694">RNA-binding</keyword>
<keyword id="KW-0808">Transferase</keyword>
<feature type="chain" id="PRO_1000215664" description="Polyribonucleotide nucleotidyltransferase">
    <location>
        <begin position="1"/>
        <end position="753"/>
    </location>
</feature>
<feature type="domain" description="KH" evidence="1">
    <location>
        <begin position="589"/>
        <end position="648"/>
    </location>
</feature>
<feature type="domain" description="S1 motif" evidence="1">
    <location>
        <begin position="660"/>
        <end position="732"/>
    </location>
</feature>
<feature type="region of interest" description="Disordered" evidence="2">
    <location>
        <begin position="733"/>
        <end position="753"/>
    </location>
</feature>
<feature type="binding site" evidence="1">
    <location>
        <position position="523"/>
    </location>
    <ligand>
        <name>Mg(2+)</name>
        <dbReference type="ChEBI" id="CHEBI:18420"/>
    </ligand>
</feature>
<feature type="binding site" evidence="1">
    <location>
        <position position="529"/>
    </location>
    <ligand>
        <name>Mg(2+)</name>
        <dbReference type="ChEBI" id="CHEBI:18420"/>
    </ligand>
</feature>
<dbReference type="EC" id="2.7.7.8" evidence="1"/>
<dbReference type="EMBL" id="CP001628">
    <property type="protein sequence ID" value="ACS30242.1"/>
    <property type="molecule type" value="Genomic_DNA"/>
</dbReference>
<dbReference type="RefSeq" id="WP_010079121.1">
    <property type="nucleotide sequence ID" value="NC_012803.1"/>
</dbReference>
<dbReference type="SMR" id="C5C9U0"/>
<dbReference type="STRING" id="465515.Mlut_07100"/>
<dbReference type="EnsemblBacteria" id="ACS30242">
    <property type="protein sequence ID" value="ACS30242"/>
    <property type="gene ID" value="Mlut_07100"/>
</dbReference>
<dbReference type="GeneID" id="93344875"/>
<dbReference type="KEGG" id="mlu:Mlut_07100"/>
<dbReference type="PATRIC" id="fig|465515.4.peg.673"/>
<dbReference type="eggNOG" id="COG1185">
    <property type="taxonomic scope" value="Bacteria"/>
</dbReference>
<dbReference type="HOGENOM" id="CLU_004217_2_2_11"/>
<dbReference type="Proteomes" id="UP000000738">
    <property type="component" value="Chromosome"/>
</dbReference>
<dbReference type="GO" id="GO:0005829">
    <property type="term" value="C:cytosol"/>
    <property type="evidence" value="ECO:0007669"/>
    <property type="project" value="TreeGrafter"/>
</dbReference>
<dbReference type="GO" id="GO:0000175">
    <property type="term" value="F:3'-5'-RNA exonuclease activity"/>
    <property type="evidence" value="ECO:0007669"/>
    <property type="project" value="TreeGrafter"/>
</dbReference>
<dbReference type="GO" id="GO:0000287">
    <property type="term" value="F:magnesium ion binding"/>
    <property type="evidence" value="ECO:0007669"/>
    <property type="project" value="UniProtKB-UniRule"/>
</dbReference>
<dbReference type="GO" id="GO:0004654">
    <property type="term" value="F:polyribonucleotide nucleotidyltransferase activity"/>
    <property type="evidence" value="ECO:0007669"/>
    <property type="project" value="UniProtKB-UniRule"/>
</dbReference>
<dbReference type="GO" id="GO:0003723">
    <property type="term" value="F:RNA binding"/>
    <property type="evidence" value="ECO:0007669"/>
    <property type="project" value="UniProtKB-UniRule"/>
</dbReference>
<dbReference type="GO" id="GO:0006402">
    <property type="term" value="P:mRNA catabolic process"/>
    <property type="evidence" value="ECO:0007669"/>
    <property type="project" value="UniProtKB-UniRule"/>
</dbReference>
<dbReference type="GO" id="GO:0006396">
    <property type="term" value="P:RNA processing"/>
    <property type="evidence" value="ECO:0007669"/>
    <property type="project" value="InterPro"/>
</dbReference>
<dbReference type="CDD" id="cd02393">
    <property type="entry name" value="KH-I_PNPase"/>
    <property type="match status" value="1"/>
</dbReference>
<dbReference type="CDD" id="cd11364">
    <property type="entry name" value="RNase_PH_PNPase_2"/>
    <property type="match status" value="1"/>
</dbReference>
<dbReference type="CDD" id="cd04472">
    <property type="entry name" value="S1_PNPase"/>
    <property type="match status" value="1"/>
</dbReference>
<dbReference type="FunFam" id="2.40.50.140:FF:000069">
    <property type="entry name" value="Polyribonucleotide nucleotidyltransferase"/>
    <property type="match status" value="1"/>
</dbReference>
<dbReference type="FunFam" id="3.30.1370.10:FF:000001">
    <property type="entry name" value="Polyribonucleotide nucleotidyltransferase"/>
    <property type="match status" value="1"/>
</dbReference>
<dbReference type="FunFam" id="3.30.230.70:FF:000001">
    <property type="entry name" value="Polyribonucleotide nucleotidyltransferase"/>
    <property type="match status" value="1"/>
</dbReference>
<dbReference type="FunFam" id="3.30.230.70:FF:000002">
    <property type="entry name" value="Polyribonucleotide nucleotidyltransferase"/>
    <property type="match status" value="1"/>
</dbReference>
<dbReference type="Gene3D" id="3.30.230.70">
    <property type="entry name" value="GHMP Kinase, N-terminal domain"/>
    <property type="match status" value="2"/>
</dbReference>
<dbReference type="Gene3D" id="3.30.1370.10">
    <property type="entry name" value="K Homology domain, type 1"/>
    <property type="match status" value="1"/>
</dbReference>
<dbReference type="Gene3D" id="2.40.50.140">
    <property type="entry name" value="Nucleic acid-binding proteins"/>
    <property type="match status" value="1"/>
</dbReference>
<dbReference type="HAMAP" id="MF_01595">
    <property type="entry name" value="PNPase"/>
    <property type="match status" value="1"/>
</dbReference>
<dbReference type="InterPro" id="IPR001247">
    <property type="entry name" value="ExoRNase_PH_dom1"/>
</dbReference>
<dbReference type="InterPro" id="IPR036345">
    <property type="entry name" value="ExoRNase_PH_dom2_sf"/>
</dbReference>
<dbReference type="InterPro" id="IPR014069">
    <property type="entry name" value="GPSI/PNP"/>
</dbReference>
<dbReference type="InterPro" id="IPR004087">
    <property type="entry name" value="KH_dom"/>
</dbReference>
<dbReference type="InterPro" id="IPR004088">
    <property type="entry name" value="KH_dom_type_1"/>
</dbReference>
<dbReference type="InterPro" id="IPR036612">
    <property type="entry name" value="KH_dom_type_1_sf"/>
</dbReference>
<dbReference type="InterPro" id="IPR012340">
    <property type="entry name" value="NA-bd_OB-fold"/>
</dbReference>
<dbReference type="InterPro" id="IPR012162">
    <property type="entry name" value="PNPase"/>
</dbReference>
<dbReference type="InterPro" id="IPR027408">
    <property type="entry name" value="PNPase/RNase_PH_dom_sf"/>
</dbReference>
<dbReference type="InterPro" id="IPR015848">
    <property type="entry name" value="PNPase_PH_RNA-bd_bac/org-type"/>
</dbReference>
<dbReference type="InterPro" id="IPR020568">
    <property type="entry name" value="Ribosomal_Su5_D2-typ_SF"/>
</dbReference>
<dbReference type="InterPro" id="IPR003029">
    <property type="entry name" value="S1_domain"/>
</dbReference>
<dbReference type="NCBIfam" id="TIGR03591">
    <property type="entry name" value="polynuc_phos"/>
    <property type="match status" value="1"/>
</dbReference>
<dbReference type="NCBIfam" id="TIGR02696">
    <property type="entry name" value="pppGpp_PNP"/>
    <property type="match status" value="1"/>
</dbReference>
<dbReference type="NCBIfam" id="NF008805">
    <property type="entry name" value="PRK11824.1"/>
    <property type="match status" value="1"/>
</dbReference>
<dbReference type="PANTHER" id="PTHR11252">
    <property type="entry name" value="POLYRIBONUCLEOTIDE NUCLEOTIDYLTRANSFERASE"/>
    <property type="match status" value="1"/>
</dbReference>
<dbReference type="PANTHER" id="PTHR11252:SF0">
    <property type="entry name" value="POLYRIBONUCLEOTIDE NUCLEOTIDYLTRANSFERASE 1, MITOCHONDRIAL"/>
    <property type="match status" value="1"/>
</dbReference>
<dbReference type="Pfam" id="PF00013">
    <property type="entry name" value="KH_1"/>
    <property type="match status" value="1"/>
</dbReference>
<dbReference type="Pfam" id="PF03726">
    <property type="entry name" value="PNPase"/>
    <property type="match status" value="1"/>
</dbReference>
<dbReference type="Pfam" id="PF01138">
    <property type="entry name" value="RNase_PH"/>
    <property type="match status" value="2"/>
</dbReference>
<dbReference type="Pfam" id="PF00575">
    <property type="entry name" value="S1"/>
    <property type="match status" value="1"/>
</dbReference>
<dbReference type="PIRSF" id="PIRSF005499">
    <property type="entry name" value="PNPase"/>
    <property type="match status" value="1"/>
</dbReference>
<dbReference type="SMART" id="SM00322">
    <property type="entry name" value="KH"/>
    <property type="match status" value="1"/>
</dbReference>
<dbReference type="SMART" id="SM00316">
    <property type="entry name" value="S1"/>
    <property type="match status" value="1"/>
</dbReference>
<dbReference type="SUPFAM" id="SSF54791">
    <property type="entry name" value="Eukaryotic type KH-domain (KH-domain type I)"/>
    <property type="match status" value="1"/>
</dbReference>
<dbReference type="SUPFAM" id="SSF50249">
    <property type="entry name" value="Nucleic acid-binding proteins"/>
    <property type="match status" value="1"/>
</dbReference>
<dbReference type="SUPFAM" id="SSF55666">
    <property type="entry name" value="Ribonuclease PH domain 2-like"/>
    <property type="match status" value="2"/>
</dbReference>
<dbReference type="SUPFAM" id="SSF54211">
    <property type="entry name" value="Ribosomal protein S5 domain 2-like"/>
    <property type="match status" value="2"/>
</dbReference>
<dbReference type="PROSITE" id="PS50084">
    <property type="entry name" value="KH_TYPE_1"/>
    <property type="match status" value="1"/>
</dbReference>
<dbReference type="PROSITE" id="PS50126">
    <property type="entry name" value="S1"/>
    <property type="match status" value="1"/>
</dbReference>
<comment type="function">
    <text evidence="1">Involved in mRNA degradation. Catalyzes the phosphorolysis of single-stranded polyribonucleotides processively in the 3'- to 5'-direction.</text>
</comment>
<comment type="catalytic activity">
    <reaction evidence="1">
        <text>RNA(n+1) + phosphate = RNA(n) + a ribonucleoside 5'-diphosphate</text>
        <dbReference type="Rhea" id="RHEA:22096"/>
        <dbReference type="Rhea" id="RHEA-COMP:14527"/>
        <dbReference type="Rhea" id="RHEA-COMP:17342"/>
        <dbReference type="ChEBI" id="CHEBI:43474"/>
        <dbReference type="ChEBI" id="CHEBI:57930"/>
        <dbReference type="ChEBI" id="CHEBI:140395"/>
        <dbReference type="EC" id="2.7.7.8"/>
    </reaction>
</comment>
<comment type="cofactor">
    <cofactor evidence="1">
        <name>Mg(2+)</name>
        <dbReference type="ChEBI" id="CHEBI:18420"/>
    </cofactor>
</comment>
<comment type="subcellular location">
    <subcellularLocation>
        <location evidence="1">Cytoplasm</location>
    </subcellularLocation>
</comment>
<comment type="similarity">
    <text evidence="1">Belongs to the polyribonucleotide nucleotidyltransferase family.</text>
</comment>